<comment type="function">
    <text evidence="1 2 4">Microtubule inner protein (MIP) part of the dynein-decorated doublet microtubules (DMTs) in cilia axoneme (PubMed:34715025). Acts as a regulator of cilium basal body docking and positioning in mono- and multiciliated cells. Regulates basal body docking and cilia formation in multiciliated lung cells. Regulates kinocilium positioning and stereocilia bundle morphogenesis in the inner ear (By similarity).</text>
</comment>
<comment type="subunit">
    <text evidence="2">Microtubule inner protein component of sperm flagellar doublet microtubules. Interacts with DLG3.</text>
</comment>
<comment type="subcellular location">
    <subcellularLocation>
        <location evidence="2">Cytoplasm</location>
        <location evidence="2">Cytoskeleton</location>
        <location evidence="2">Cilium basal body</location>
    </subcellularLocation>
    <subcellularLocation>
        <location evidence="2">Cell projection</location>
        <location evidence="2">Cilium</location>
    </subcellularLocation>
    <subcellularLocation>
        <location evidence="2">Apical cell membrane</location>
    </subcellularLocation>
    <subcellularLocation>
        <location evidence="4">Cytoplasm</location>
        <location evidence="4">Cytoskeleton</location>
        <location evidence="4">Cilium axoneme</location>
    </subcellularLocation>
    <subcellularLocation>
        <location evidence="2">Cytoplasm</location>
        <location evidence="2">Cytoskeleton</location>
        <location evidence="2">Flagellum axoneme</location>
    </subcellularLocation>
    <text evidence="2 4">Localizes to the apical cell membrane, the basal body and the primary cilium in monociliated node cells (By similarity).</text>
</comment>
<comment type="tissue specificity">
    <text evidence="4">Expressed in trachea multiciliated cells.</text>
</comment>
<comment type="similarity">
    <text evidence="5">Belongs to the Flattop family.</text>
</comment>
<accession>Q3SZT6</accession>
<name>FLTOP_BOVIN</name>
<reference key="1">
    <citation type="submission" date="2005-08" db="EMBL/GenBank/DDBJ databases">
        <authorList>
            <consortium name="NIH - Mammalian Gene Collection (MGC) project"/>
        </authorList>
    </citation>
    <scope>NUCLEOTIDE SEQUENCE [LARGE SCALE MRNA]</scope>
    <source>
        <strain>Crossbred X Angus</strain>
        <tissue>Liver</tissue>
    </source>
</reference>
<reference evidence="6" key="2">
    <citation type="journal article" date="2021" name="Cell">
        <title>De novo identification of mammalian ciliary motility proteins using cryo-EM.</title>
        <authorList>
            <person name="Gui M."/>
            <person name="Farley H."/>
            <person name="Anujan P."/>
            <person name="Anderson J.R."/>
            <person name="Maxwell D.W."/>
            <person name="Whitchurch J.B."/>
            <person name="Botsch J.J."/>
            <person name="Qiu T."/>
            <person name="Meleppattu S."/>
            <person name="Singh S.K."/>
            <person name="Zhang Q."/>
            <person name="Thompson J."/>
            <person name="Lucas J.S."/>
            <person name="Bingle C.D."/>
            <person name="Norris D.P."/>
            <person name="Roy S."/>
            <person name="Brown A."/>
        </authorList>
    </citation>
    <scope>STRUCTURE BY ELECTRON MICROSCOPY (3.40 ANGSTROMS)</scope>
    <scope>SUBCELLULAR LOCATION</scope>
    <scope>TISSUE SPECIFICITY</scope>
</reference>
<keyword id="KW-0002">3D-structure</keyword>
<keyword id="KW-1003">Cell membrane</keyword>
<keyword id="KW-0966">Cell projection</keyword>
<keyword id="KW-0969">Cilium</keyword>
<keyword id="KW-0970">Cilium biogenesis/degradation</keyword>
<keyword id="KW-0963">Cytoplasm</keyword>
<keyword id="KW-0206">Cytoskeleton</keyword>
<keyword id="KW-0282">Flagellum</keyword>
<keyword id="KW-0472">Membrane</keyword>
<keyword id="KW-1185">Reference proteome</keyword>
<proteinExistence type="evidence at protein level"/>
<gene>
    <name evidence="2" type="primary">CFAP126</name>
    <name evidence="2" type="synonym">FLTP</name>
</gene>
<organism>
    <name type="scientific">Bos taurus</name>
    <name type="common">Bovine</name>
    <dbReference type="NCBI Taxonomy" id="9913"/>
    <lineage>
        <taxon>Eukaryota</taxon>
        <taxon>Metazoa</taxon>
        <taxon>Chordata</taxon>
        <taxon>Craniata</taxon>
        <taxon>Vertebrata</taxon>
        <taxon>Euteleostomi</taxon>
        <taxon>Mammalia</taxon>
        <taxon>Eutheria</taxon>
        <taxon>Laurasiatheria</taxon>
        <taxon>Artiodactyla</taxon>
        <taxon>Ruminantia</taxon>
        <taxon>Pecora</taxon>
        <taxon>Bovidae</taxon>
        <taxon>Bovinae</taxon>
        <taxon>Bos</taxon>
    </lineage>
</organism>
<protein>
    <recommendedName>
        <fullName evidence="5">Protein Flattop</fullName>
    </recommendedName>
    <alternativeName>
        <fullName evidence="2">Cilia- and flagella-associated protein 126</fullName>
    </alternativeName>
</protein>
<sequence length="196" mass="21185">MATNYSANQYEKPFSPKYLQNWSLAKPTKERISSHEGYTQIIANDRGHLLPSVPRSKASPWGSFMGTWQMPLKVPPARATLTSRTAAGAASLTRWIQKNPDLLKASNGLRPEIFGKPHDPDSQKKLRKSITKTVQQAPSPTIIPSSPASNLSSPDQLQSSHPSAGHTPGPQSPLNSPKCPPGSPCLPHAGRNLAEV</sequence>
<evidence type="ECO:0000250" key="1">
    <source>
        <dbReference type="UniProtKB" id="Q5VTH2"/>
    </source>
</evidence>
<evidence type="ECO:0000250" key="2">
    <source>
        <dbReference type="UniProtKB" id="Q6P8X9"/>
    </source>
</evidence>
<evidence type="ECO:0000256" key="3">
    <source>
        <dbReference type="SAM" id="MobiDB-lite"/>
    </source>
</evidence>
<evidence type="ECO:0000269" key="4">
    <source>
    </source>
</evidence>
<evidence type="ECO:0000305" key="5"/>
<evidence type="ECO:0007744" key="6">
    <source>
        <dbReference type="PDB" id="7RRO"/>
    </source>
</evidence>
<feature type="chain" id="PRO_0000316971" description="Protein Flattop">
    <location>
        <begin position="1"/>
        <end position="196"/>
    </location>
</feature>
<feature type="region of interest" description="Disordered" evidence="3">
    <location>
        <begin position="107"/>
        <end position="196"/>
    </location>
</feature>
<feature type="compositionally biased region" description="Basic and acidic residues" evidence="3">
    <location>
        <begin position="113"/>
        <end position="124"/>
    </location>
</feature>
<feature type="compositionally biased region" description="Low complexity" evidence="3">
    <location>
        <begin position="137"/>
        <end position="149"/>
    </location>
</feature>
<feature type="compositionally biased region" description="Polar residues" evidence="3">
    <location>
        <begin position="150"/>
        <end position="162"/>
    </location>
</feature>
<dbReference type="EMBL" id="BC102717">
    <property type="protein sequence ID" value="AAI02718.1"/>
    <property type="molecule type" value="mRNA"/>
</dbReference>
<dbReference type="RefSeq" id="XP_005203547.1">
    <property type="nucleotide sequence ID" value="XM_005203490.3"/>
</dbReference>
<dbReference type="RefSeq" id="XP_024843103.1">
    <property type="nucleotide sequence ID" value="XM_024987335.2"/>
</dbReference>
<dbReference type="PDB" id="7RRO">
    <property type="method" value="EM"/>
    <property type="resolution" value="3.40 A"/>
    <property type="chains" value="l/m/n=1-196"/>
</dbReference>
<dbReference type="PDB" id="9CPB">
    <property type="method" value="EM"/>
    <property type="resolution" value="3.52 A"/>
    <property type="chains" value="1N/1O/1P=1-196"/>
</dbReference>
<dbReference type="PDBsum" id="7RRO"/>
<dbReference type="PDBsum" id="9CPB"/>
<dbReference type="EMDB" id="EMD-17187"/>
<dbReference type="EMDB" id="EMD-24664"/>
<dbReference type="EMDB" id="EMD-45801"/>
<dbReference type="EMDB" id="EMD-50664"/>
<dbReference type="SMR" id="Q3SZT6"/>
<dbReference type="FunCoup" id="Q3SZT6">
    <property type="interactions" value="154"/>
</dbReference>
<dbReference type="STRING" id="9913.ENSBTAP00000030094"/>
<dbReference type="PaxDb" id="9913-ENSBTAP00000030094"/>
<dbReference type="Ensembl" id="ENSBTAT00000021077.6">
    <property type="protein sequence ID" value="ENSBTAP00000021077.4"/>
    <property type="gene ID" value="ENSBTAG00000015856.6"/>
</dbReference>
<dbReference type="GeneID" id="510399"/>
<dbReference type="VEuPathDB" id="HostDB:ENSBTAG00000015856"/>
<dbReference type="VGNC" id="VGNC:27237">
    <property type="gene designation" value="CFAP126"/>
</dbReference>
<dbReference type="eggNOG" id="ENOG502S5M4">
    <property type="taxonomic scope" value="Eukaryota"/>
</dbReference>
<dbReference type="GeneTree" id="ENSGT00390000001092"/>
<dbReference type="HOGENOM" id="CLU_108980_0_0_1"/>
<dbReference type="InParanoid" id="Q3SZT6"/>
<dbReference type="OrthoDB" id="521617at2759"/>
<dbReference type="Proteomes" id="UP000009136">
    <property type="component" value="Chromosome 3"/>
</dbReference>
<dbReference type="Bgee" id="ENSBTAG00000015856">
    <property type="expression patterns" value="Expressed in olfactory segment of nasal mucosa and 106 other cell types or tissues"/>
</dbReference>
<dbReference type="GO" id="GO:0016324">
    <property type="term" value="C:apical plasma membrane"/>
    <property type="evidence" value="ECO:0000250"/>
    <property type="project" value="UniProtKB"/>
</dbReference>
<dbReference type="GO" id="GO:0160112">
    <property type="term" value="C:axonemal B tubule inner sheath"/>
    <property type="evidence" value="ECO:0000250"/>
    <property type="project" value="UniProtKB"/>
</dbReference>
<dbReference type="GO" id="GO:0005879">
    <property type="term" value="C:axonemal microtubule"/>
    <property type="evidence" value="ECO:0000314"/>
    <property type="project" value="UniProtKB"/>
</dbReference>
<dbReference type="GO" id="GO:0036064">
    <property type="term" value="C:ciliary basal body"/>
    <property type="evidence" value="ECO:0000250"/>
    <property type="project" value="UniProtKB"/>
</dbReference>
<dbReference type="GO" id="GO:0005929">
    <property type="term" value="C:cilium"/>
    <property type="evidence" value="ECO:0000250"/>
    <property type="project" value="UniProtKB"/>
</dbReference>
<dbReference type="GO" id="GO:0036126">
    <property type="term" value="C:sperm flagellum"/>
    <property type="evidence" value="ECO:0000250"/>
    <property type="project" value="UniProtKB"/>
</dbReference>
<dbReference type="GO" id="GO:0044782">
    <property type="term" value="P:cilium organization"/>
    <property type="evidence" value="ECO:0000250"/>
    <property type="project" value="UniProtKB"/>
</dbReference>
<dbReference type="GO" id="GO:0030317">
    <property type="term" value="P:flagellated sperm motility"/>
    <property type="evidence" value="ECO:0000250"/>
    <property type="project" value="UniProtKB"/>
</dbReference>
<dbReference type="CDD" id="cd23705">
    <property type="entry name" value="Flattop"/>
    <property type="match status" value="1"/>
</dbReference>
<dbReference type="InterPro" id="IPR038797">
    <property type="entry name" value="Fltp"/>
</dbReference>
<dbReference type="PANTHER" id="PTHR34639">
    <property type="entry name" value="PROTEIN FLATTOP"/>
    <property type="match status" value="1"/>
</dbReference>
<dbReference type="PANTHER" id="PTHR34639:SF1">
    <property type="entry name" value="PROTEIN FLATTOP"/>
    <property type="match status" value="1"/>
</dbReference>
<dbReference type="Pfam" id="PF22611">
    <property type="entry name" value="CFAP126"/>
    <property type="match status" value="1"/>
</dbReference>